<comment type="similarity">
    <text evidence="1">Belongs to the bacterial ribosomal protein bS16 family.</text>
</comment>
<evidence type="ECO:0000255" key="1">
    <source>
        <dbReference type="HAMAP-Rule" id="MF_00385"/>
    </source>
</evidence>
<evidence type="ECO:0000305" key="2"/>
<name>RS16_METPP</name>
<accession>A2SES6</accession>
<organism>
    <name type="scientific">Methylibium petroleiphilum (strain ATCC BAA-1232 / LMG 22953 / PM1)</name>
    <dbReference type="NCBI Taxonomy" id="420662"/>
    <lineage>
        <taxon>Bacteria</taxon>
        <taxon>Pseudomonadati</taxon>
        <taxon>Pseudomonadota</taxon>
        <taxon>Betaproteobacteria</taxon>
        <taxon>Burkholderiales</taxon>
        <taxon>Sphaerotilaceae</taxon>
        <taxon>Methylibium</taxon>
    </lineage>
</organism>
<proteinExistence type="inferred from homology"/>
<protein>
    <recommendedName>
        <fullName evidence="1">Small ribosomal subunit protein bS16</fullName>
    </recommendedName>
    <alternativeName>
        <fullName evidence="2">30S ribosomal protein S16</fullName>
    </alternativeName>
</protein>
<dbReference type="EMBL" id="CP000555">
    <property type="protein sequence ID" value="ABM94065.1"/>
    <property type="molecule type" value="Genomic_DNA"/>
</dbReference>
<dbReference type="RefSeq" id="WP_011828702.1">
    <property type="nucleotide sequence ID" value="NC_008825.1"/>
</dbReference>
<dbReference type="SMR" id="A2SES6"/>
<dbReference type="STRING" id="420662.Mpe_A1104"/>
<dbReference type="KEGG" id="mpt:Mpe_A1104"/>
<dbReference type="eggNOG" id="COG0228">
    <property type="taxonomic scope" value="Bacteria"/>
</dbReference>
<dbReference type="HOGENOM" id="CLU_100590_5_1_4"/>
<dbReference type="Proteomes" id="UP000000366">
    <property type="component" value="Chromosome"/>
</dbReference>
<dbReference type="GO" id="GO:0005737">
    <property type="term" value="C:cytoplasm"/>
    <property type="evidence" value="ECO:0007669"/>
    <property type="project" value="UniProtKB-ARBA"/>
</dbReference>
<dbReference type="GO" id="GO:0015935">
    <property type="term" value="C:small ribosomal subunit"/>
    <property type="evidence" value="ECO:0007669"/>
    <property type="project" value="TreeGrafter"/>
</dbReference>
<dbReference type="GO" id="GO:0003735">
    <property type="term" value="F:structural constituent of ribosome"/>
    <property type="evidence" value="ECO:0007669"/>
    <property type="project" value="InterPro"/>
</dbReference>
<dbReference type="GO" id="GO:0006412">
    <property type="term" value="P:translation"/>
    <property type="evidence" value="ECO:0007669"/>
    <property type="project" value="UniProtKB-UniRule"/>
</dbReference>
<dbReference type="Gene3D" id="3.30.1320.10">
    <property type="match status" value="1"/>
</dbReference>
<dbReference type="HAMAP" id="MF_00385">
    <property type="entry name" value="Ribosomal_bS16"/>
    <property type="match status" value="1"/>
</dbReference>
<dbReference type="InterPro" id="IPR000307">
    <property type="entry name" value="Ribosomal_bS16"/>
</dbReference>
<dbReference type="InterPro" id="IPR023803">
    <property type="entry name" value="Ribosomal_bS16_dom_sf"/>
</dbReference>
<dbReference type="NCBIfam" id="TIGR00002">
    <property type="entry name" value="S16"/>
    <property type="match status" value="1"/>
</dbReference>
<dbReference type="PANTHER" id="PTHR12919">
    <property type="entry name" value="30S RIBOSOMAL PROTEIN S16"/>
    <property type="match status" value="1"/>
</dbReference>
<dbReference type="PANTHER" id="PTHR12919:SF20">
    <property type="entry name" value="SMALL RIBOSOMAL SUBUNIT PROTEIN BS16M"/>
    <property type="match status" value="1"/>
</dbReference>
<dbReference type="Pfam" id="PF00886">
    <property type="entry name" value="Ribosomal_S16"/>
    <property type="match status" value="1"/>
</dbReference>
<dbReference type="SUPFAM" id="SSF54565">
    <property type="entry name" value="Ribosomal protein S16"/>
    <property type="match status" value="1"/>
</dbReference>
<feature type="chain" id="PRO_1000049290" description="Small ribosomal subunit protein bS16">
    <location>
        <begin position="1"/>
        <end position="86"/>
    </location>
</feature>
<keyword id="KW-1185">Reference proteome</keyword>
<keyword id="KW-0687">Ribonucleoprotein</keyword>
<keyword id="KW-0689">Ribosomal protein</keyword>
<reference key="1">
    <citation type="journal article" date="2007" name="J. Bacteriol.">
        <title>Whole-genome analysis of the methyl tert-butyl ether-degrading beta-proteobacterium Methylibium petroleiphilum PM1.</title>
        <authorList>
            <person name="Kane S.R."/>
            <person name="Chakicherla A.Y."/>
            <person name="Chain P.S.G."/>
            <person name="Schmidt R."/>
            <person name="Shin M.W."/>
            <person name="Legler T.C."/>
            <person name="Scow K.M."/>
            <person name="Larimer F.W."/>
            <person name="Lucas S.M."/>
            <person name="Richardson P.M."/>
            <person name="Hristova K.R."/>
        </authorList>
    </citation>
    <scope>NUCLEOTIDE SEQUENCE [LARGE SCALE GENOMIC DNA]</scope>
    <source>
        <strain>ATCC BAA-1232 / LMG 22953 / PM1</strain>
    </source>
</reference>
<gene>
    <name evidence="1" type="primary">rpsP</name>
    <name type="ordered locus">Mpe_A1104</name>
</gene>
<sequence>MVVIRLARGGSKKRPFYNIVAAPARIRRDGRFLERVGFYNPVAAGGEEPLRVAFDRIDHWVSHGAQLSPTVARLVKDAKAKVAPAA</sequence>